<sequence length="266" mass="30278">MSVKVMTHDNMFVGMKEVDHYLAPSDYEDESESELFYESYYSDDIFEDNESDLWVDHEDDPWIEQLDDPVKTPKIIKPYPWMTSPTKSVDKAAQKEKKMPDWWTKPTTVTPTRNEQGILNYSLLLPPSTKKPTQPNKRRKNGGAKPPNSKPLGNPAKPNGVSQQQQGPKRDSTQQPTRLCKSVLKQAKCYFGAQCGYAHRYSDLKECSYGKNCKKIVLVRVNQDGTLHLANKPGAVCNFKHTNEAQQSYLARLPQSTASPKNPRKK</sequence>
<evidence type="ECO:0000255" key="1">
    <source>
        <dbReference type="PROSITE-ProRule" id="PRU00723"/>
    </source>
</evidence>
<evidence type="ECO:0000256" key="2">
    <source>
        <dbReference type="SAM" id="MobiDB-lite"/>
    </source>
</evidence>
<evidence type="ECO:0000305" key="3"/>
<name>VF077_IIV3</name>
<comment type="similarity">
    <text evidence="3">Belongs to the IIV-6 077L family.</text>
</comment>
<proteinExistence type="inferred from homology"/>
<dbReference type="EMBL" id="DQ643392">
    <property type="protein sequence ID" value="ABF82064.1"/>
    <property type="molecule type" value="Genomic_DNA"/>
</dbReference>
<dbReference type="RefSeq" id="YP_654606.1">
    <property type="nucleotide sequence ID" value="NC_008187.1"/>
</dbReference>
<dbReference type="KEGG" id="vg:4156344"/>
<dbReference type="OrthoDB" id="23511at10239"/>
<dbReference type="Proteomes" id="UP000001358">
    <property type="component" value="Genome"/>
</dbReference>
<dbReference type="GO" id="GO:0008270">
    <property type="term" value="F:zinc ion binding"/>
    <property type="evidence" value="ECO:0007669"/>
    <property type="project" value="UniProtKB-KW"/>
</dbReference>
<dbReference type="InterPro" id="IPR045410">
    <property type="entry name" value="Zn_finger_prot"/>
</dbReference>
<dbReference type="InterPro" id="IPR000571">
    <property type="entry name" value="Znf_CCCH"/>
</dbReference>
<dbReference type="InterPro" id="IPR036855">
    <property type="entry name" value="Znf_CCCH_sf"/>
</dbReference>
<dbReference type="Pfam" id="PF19242">
    <property type="entry name" value="Zn_finger_prot"/>
    <property type="match status" value="1"/>
</dbReference>
<dbReference type="SUPFAM" id="SSF90229">
    <property type="entry name" value="CCCH zinc finger"/>
    <property type="match status" value="1"/>
</dbReference>
<dbReference type="PROSITE" id="PS50103">
    <property type="entry name" value="ZF_C3H1"/>
    <property type="match status" value="1"/>
</dbReference>
<organismHost>
    <name type="scientific">Aedes vexans</name>
    <name type="common">Inland floodwater mosquito</name>
    <name type="synonym">Culex vexans</name>
    <dbReference type="NCBI Taxonomy" id="7163"/>
</organismHost>
<organismHost>
    <name type="scientific">Culex territans</name>
    <dbReference type="NCBI Taxonomy" id="42431"/>
</organismHost>
<organismHost>
    <name type="scientific">Culiseta annulata</name>
    <dbReference type="NCBI Taxonomy" id="332058"/>
</organismHost>
<organismHost>
    <name type="scientific">Ochlerotatus sollicitans</name>
    <name type="common">eastern saltmarsh mosquito</name>
    <dbReference type="NCBI Taxonomy" id="310513"/>
</organismHost>
<organismHost>
    <name type="scientific">Ochlerotatus taeniorhynchus</name>
    <name type="common">Black salt marsh mosquito</name>
    <name type="synonym">Aedes taeniorhynchus</name>
    <dbReference type="NCBI Taxonomy" id="329105"/>
</organismHost>
<organismHost>
    <name type="scientific">Psorophora ferox</name>
    <dbReference type="NCBI Taxonomy" id="7183"/>
</organismHost>
<feature type="chain" id="PRO_0000377922" description="Putative zinc finger protein 034R">
    <location>
        <begin position="1"/>
        <end position="266"/>
    </location>
</feature>
<feature type="zinc finger region" description="C3H1-type" evidence="1">
    <location>
        <begin position="180"/>
        <end position="192"/>
    </location>
</feature>
<feature type="region of interest" description="Disordered" evidence="2">
    <location>
        <begin position="84"/>
        <end position="176"/>
    </location>
</feature>
<feature type="compositionally biased region" description="Basic and acidic residues" evidence="2">
    <location>
        <begin position="88"/>
        <end position="100"/>
    </location>
</feature>
<feature type="compositionally biased region" description="Polar residues" evidence="2">
    <location>
        <begin position="105"/>
        <end position="119"/>
    </location>
</feature>
<feature type="compositionally biased region" description="Polar residues" evidence="2">
    <location>
        <begin position="160"/>
        <end position="176"/>
    </location>
</feature>
<gene>
    <name type="ORF">IIV3-034R</name>
</gene>
<keyword id="KW-0479">Metal-binding</keyword>
<keyword id="KW-1185">Reference proteome</keyword>
<keyword id="KW-0862">Zinc</keyword>
<keyword id="KW-0863">Zinc-finger</keyword>
<accession>Q197C6</accession>
<organism>
    <name type="scientific">Invertebrate iridescent virus 3</name>
    <name type="common">IIV-3</name>
    <name type="synonym">Mosquito iridescent virus</name>
    <dbReference type="NCBI Taxonomy" id="345201"/>
    <lineage>
        <taxon>Viruses</taxon>
        <taxon>Varidnaviria</taxon>
        <taxon>Bamfordvirae</taxon>
        <taxon>Nucleocytoviricota</taxon>
        <taxon>Megaviricetes</taxon>
        <taxon>Pimascovirales</taxon>
        <taxon>Iridoviridae</taxon>
        <taxon>Betairidovirinae</taxon>
        <taxon>Chloriridovirus</taxon>
    </lineage>
</organism>
<reference key="1">
    <citation type="journal article" date="2006" name="J. Virol.">
        <title>Genome of invertebrate iridescent virus type 3 (mosquito iridescent virus).</title>
        <authorList>
            <person name="Delhon G."/>
            <person name="Tulman E.R."/>
            <person name="Afonso C.L."/>
            <person name="Lu Z."/>
            <person name="Becnel J.J."/>
            <person name="Moser B.A."/>
            <person name="Kutish G.F."/>
            <person name="Rock D.L."/>
        </authorList>
    </citation>
    <scope>NUCLEOTIDE SEQUENCE [LARGE SCALE GENOMIC DNA]</scope>
</reference>
<protein>
    <recommendedName>
        <fullName>Putative zinc finger protein 034R</fullName>
    </recommendedName>
</protein>